<proteinExistence type="inferred from homology"/>
<comment type="catalytic activity">
    <reaction evidence="1">
        <text>(2R)-3-phosphoglycerate + ATP = (2R)-3-phospho-glyceroyl phosphate + ADP</text>
        <dbReference type="Rhea" id="RHEA:14801"/>
        <dbReference type="ChEBI" id="CHEBI:30616"/>
        <dbReference type="ChEBI" id="CHEBI:57604"/>
        <dbReference type="ChEBI" id="CHEBI:58272"/>
        <dbReference type="ChEBI" id="CHEBI:456216"/>
        <dbReference type="EC" id="2.7.2.3"/>
    </reaction>
</comment>
<comment type="pathway">
    <text evidence="1">Carbohydrate degradation; glycolysis; pyruvate from D-glyceraldehyde 3-phosphate: step 2/5.</text>
</comment>
<comment type="subunit">
    <text evidence="1">Monomer.</text>
</comment>
<comment type="subcellular location">
    <subcellularLocation>
        <location evidence="1">Cytoplasm</location>
    </subcellularLocation>
</comment>
<comment type="similarity">
    <text evidence="1">Belongs to the phosphoglycerate kinase family.</text>
</comment>
<feature type="chain" id="PRO_1000096324" description="Phosphoglycerate kinase">
    <location>
        <begin position="1"/>
        <end position="397"/>
    </location>
</feature>
<feature type="binding site" evidence="1">
    <location>
        <begin position="21"/>
        <end position="23"/>
    </location>
    <ligand>
        <name>substrate</name>
    </ligand>
</feature>
<feature type="binding site" evidence="1">
    <location>
        <position position="37"/>
    </location>
    <ligand>
        <name>substrate</name>
    </ligand>
</feature>
<feature type="binding site" evidence="1">
    <location>
        <begin position="60"/>
        <end position="63"/>
    </location>
    <ligand>
        <name>substrate</name>
    </ligand>
</feature>
<feature type="binding site" evidence="1">
    <location>
        <position position="119"/>
    </location>
    <ligand>
        <name>substrate</name>
    </ligand>
</feature>
<feature type="binding site" evidence="1">
    <location>
        <position position="152"/>
    </location>
    <ligand>
        <name>substrate</name>
    </ligand>
</feature>
<feature type="binding site" evidence="1">
    <location>
        <position position="203"/>
    </location>
    <ligand>
        <name>ATP</name>
        <dbReference type="ChEBI" id="CHEBI:30616"/>
    </ligand>
</feature>
<feature type="binding site" evidence="1">
    <location>
        <position position="294"/>
    </location>
    <ligand>
        <name>ATP</name>
        <dbReference type="ChEBI" id="CHEBI:30616"/>
    </ligand>
</feature>
<feature type="binding site" evidence="1">
    <location>
        <position position="325"/>
    </location>
    <ligand>
        <name>ATP</name>
        <dbReference type="ChEBI" id="CHEBI:30616"/>
    </ligand>
</feature>
<feature type="binding site" evidence="1">
    <location>
        <begin position="354"/>
        <end position="357"/>
    </location>
    <ligand>
        <name>ATP</name>
        <dbReference type="ChEBI" id="CHEBI:30616"/>
    </ligand>
</feature>
<reference key="1">
    <citation type="submission" date="2008-05" db="EMBL/GenBank/DDBJ databases">
        <title>Complete sequence of Chlorobium limicola DSM 245.</title>
        <authorList>
            <consortium name="US DOE Joint Genome Institute"/>
            <person name="Lucas S."/>
            <person name="Copeland A."/>
            <person name="Lapidus A."/>
            <person name="Glavina del Rio T."/>
            <person name="Dalin E."/>
            <person name="Tice H."/>
            <person name="Bruce D."/>
            <person name="Goodwin L."/>
            <person name="Pitluck S."/>
            <person name="Schmutz J."/>
            <person name="Larimer F."/>
            <person name="Land M."/>
            <person name="Hauser L."/>
            <person name="Kyrpides N."/>
            <person name="Ovchinnikova G."/>
            <person name="Zhao F."/>
            <person name="Li T."/>
            <person name="Liu Z."/>
            <person name="Overmann J."/>
            <person name="Bryant D.A."/>
            <person name="Richardson P."/>
        </authorList>
    </citation>
    <scope>NUCLEOTIDE SEQUENCE [LARGE SCALE GENOMIC DNA]</scope>
    <source>
        <strain>DSM 245 / NBRC 103803 / 6330</strain>
    </source>
</reference>
<sequence length="397" mass="42391">MQKKTLSDITIQGKRVLMRVDFNVPLDEEKNITDDKRIVEALPSIKKIIENGGRLILMSHLGRPKGKPNQDFSLTPAAERLSELLDCPVIMAGDCIGTEVMQQVLALQDGEVIMLENLRFHPEEEANDPDFAKELASLGEIYVNDAFGTAHRAHASTEGITRYVQTAVAGYLIEKELMYLGKALQEPERPFVAILGGSKISGKIDVLENLFNKVDTVLIGGAMVFTFFKAQGLGTGNSLVEENKLELALSLIEQAARKNIKLLLPQDIIIAPEISADAESMAVAVNAIPDGMIGVDIGPETRAAYRQEILGARTVLWNGPMGVFEIDRFAEGTIAIAEAMADATAAGATTIIGGGDSAAAVAKAGLADQITHISTGGGASLEFLEGKELPGIAALND</sequence>
<keyword id="KW-0067">ATP-binding</keyword>
<keyword id="KW-0963">Cytoplasm</keyword>
<keyword id="KW-0324">Glycolysis</keyword>
<keyword id="KW-0418">Kinase</keyword>
<keyword id="KW-0547">Nucleotide-binding</keyword>
<keyword id="KW-0808">Transferase</keyword>
<dbReference type="EC" id="2.7.2.3" evidence="1"/>
<dbReference type="EMBL" id="CP001097">
    <property type="protein sequence ID" value="ACD91533.1"/>
    <property type="molecule type" value="Genomic_DNA"/>
</dbReference>
<dbReference type="RefSeq" id="WP_012467397.1">
    <property type="nucleotide sequence ID" value="NC_010803.1"/>
</dbReference>
<dbReference type="SMR" id="B3EIM1"/>
<dbReference type="STRING" id="290315.Clim_2515"/>
<dbReference type="KEGG" id="cli:Clim_2515"/>
<dbReference type="eggNOG" id="COG0126">
    <property type="taxonomic scope" value="Bacteria"/>
</dbReference>
<dbReference type="HOGENOM" id="CLU_025427_0_2_10"/>
<dbReference type="OrthoDB" id="9808460at2"/>
<dbReference type="UniPathway" id="UPA00109">
    <property type="reaction ID" value="UER00185"/>
</dbReference>
<dbReference type="Proteomes" id="UP000008841">
    <property type="component" value="Chromosome"/>
</dbReference>
<dbReference type="GO" id="GO:0005829">
    <property type="term" value="C:cytosol"/>
    <property type="evidence" value="ECO:0007669"/>
    <property type="project" value="TreeGrafter"/>
</dbReference>
<dbReference type="GO" id="GO:0043531">
    <property type="term" value="F:ADP binding"/>
    <property type="evidence" value="ECO:0007669"/>
    <property type="project" value="TreeGrafter"/>
</dbReference>
<dbReference type="GO" id="GO:0005524">
    <property type="term" value="F:ATP binding"/>
    <property type="evidence" value="ECO:0007669"/>
    <property type="project" value="UniProtKB-KW"/>
</dbReference>
<dbReference type="GO" id="GO:0004618">
    <property type="term" value="F:phosphoglycerate kinase activity"/>
    <property type="evidence" value="ECO:0007669"/>
    <property type="project" value="UniProtKB-UniRule"/>
</dbReference>
<dbReference type="GO" id="GO:0006094">
    <property type="term" value="P:gluconeogenesis"/>
    <property type="evidence" value="ECO:0007669"/>
    <property type="project" value="TreeGrafter"/>
</dbReference>
<dbReference type="GO" id="GO:0006096">
    <property type="term" value="P:glycolytic process"/>
    <property type="evidence" value="ECO:0007669"/>
    <property type="project" value="UniProtKB-UniRule"/>
</dbReference>
<dbReference type="FunFam" id="3.40.50.1260:FF:000003">
    <property type="entry name" value="Phosphoglycerate kinase"/>
    <property type="match status" value="1"/>
</dbReference>
<dbReference type="FunFam" id="3.40.50.1260:FF:000006">
    <property type="entry name" value="Phosphoglycerate kinase"/>
    <property type="match status" value="1"/>
</dbReference>
<dbReference type="Gene3D" id="3.40.50.1260">
    <property type="entry name" value="Phosphoglycerate kinase, N-terminal domain"/>
    <property type="match status" value="2"/>
</dbReference>
<dbReference type="HAMAP" id="MF_00145">
    <property type="entry name" value="Phosphoglyc_kinase"/>
    <property type="match status" value="1"/>
</dbReference>
<dbReference type="InterPro" id="IPR001576">
    <property type="entry name" value="Phosphoglycerate_kinase"/>
</dbReference>
<dbReference type="InterPro" id="IPR015911">
    <property type="entry name" value="Phosphoglycerate_kinase_CS"/>
</dbReference>
<dbReference type="InterPro" id="IPR015824">
    <property type="entry name" value="Phosphoglycerate_kinase_N"/>
</dbReference>
<dbReference type="InterPro" id="IPR036043">
    <property type="entry name" value="Phosphoglycerate_kinase_sf"/>
</dbReference>
<dbReference type="PANTHER" id="PTHR11406">
    <property type="entry name" value="PHOSPHOGLYCERATE KINASE"/>
    <property type="match status" value="1"/>
</dbReference>
<dbReference type="PANTHER" id="PTHR11406:SF23">
    <property type="entry name" value="PHOSPHOGLYCERATE KINASE 1, CHLOROPLASTIC-RELATED"/>
    <property type="match status" value="1"/>
</dbReference>
<dbReference type="Pfam" id="PF00162">
    <property type="entry name" value="PGK"/>
    <property type="match status" value="1"/>
</dbReference>
<dbReference type="PIRSF" id="PIRSF000724">
    <property type="entry name" value="Pgk"/>
    <property type="match status" value="1"/>
</dbReference>
<dbReference type="PRINTS" id="PR00477">
    <property type="entry name" value="PHGLYCKINASE"/>
</dbReference>
<dbReference type="SUPFAM" id="SSF53748">
    <property type="entry name" value="Phosphoglycerate kinase"/>
    <property type="match status" value="1"/>
</dbReference>
<dbReference type="PROSITE" id="PS00111">
    <property type="entry name" value="PGLYCERATE_KINASE"/>
    <property type="match status" value="1"/>
</dbReference>
<protein>
    <recommendedName>
        <fullName evidence="1">Phosphoglycerate kinase</fullName>
        <ecNumber evidence="1">2.7.2.3</ecNumber>
    </recommendedName>
</protein>
<gene>
    <name evidence="1" type="primary">pgk</name>
    <name type="ordered locus">Clim_2515</name>
</gene>
<evidence type="ECO:0000255" key="1">
    <source>
        <dbReference type="HAMAP-Rule" id="MF_00145"/>
    </source>
</evidence>
<organism>
    <name type="scientific">Chlorobium limicola (strain DSM 245 / NBRC 103803 / 6330)</name>
    <dbReference type="NCBI Taxonomy" id="290315"/>
    <lineage>
        <taxon>Bacteria</taxon>
        <taxon>Pseudomonadati</taxon>
        <taxon>Chlorobiota</taxon>
        <taxon>Chlorobiia</taxon>
        <taxon>Chlorobiales</taxon>
        <taxon>Chlorobiaceae</taxon>
        <taxon>Chlorobium/Pelodictyon group</taxon>
        <taxon>Chlorobium</taxon>
    </lineage>
</organism>
<name>PGK_CHLL2</name>
<accession>B3EIM1</accession>